<name>FABZ_BURL3</name>
<dbReference type="EC" id="4.2.1.59" evidence="1"/>
<dbReference type="EMBL" id="CP000151">
    <property type="protein sequence ID" value="ABB08912.1"/>
    <property type="molecule type" value="Genomic_DNA"/>
</dbReference>
<dbReference type="RefSeq" id="WP_011352450.1">
    <property type="nucleotide sequence ID" value="NZ_WNDV01000025.1"/>
</dbReference>
<dbReference type="SMR" id="Q39F54"/>
<dbReference type="GeneID" id="93191625"/>
<dbReference type="KEGG" id="bur:Bcep18194_A5318"/>
<dbReference type="HOGENOM" id="CLU_078912_1_0_4"/>
<dbReference type="Proteomes" id="UP000002705">
    <property type="component" value="Chromosome 1"/>
</dbReference>
<dbReference type="GO" id="GO:0005737">
    <property type="term" value="C:cytoplasm"/>
    <property type="evidence" value="ECO:0007669"/>
    <property type="project" value="UniProtKB-SubCell"/>
</dbReference>
<dbReference type="GO" id="GO:0016020">
    <property type="term" value="C:membrane"/>
    <property type="evidence" value="ECO:0007669"/>
    <property type="project" value="GOC"/>
</dbReference>
<dbReference type="GO" id="GO:0019171">
    <property type="term" value="F:(3R)-hydroxyacyl-[acyl-carrier-protein] dehydratase activity"/>
    <property type="evidence" value="ECO:0007669"/>
    <property type="project" value="UniProtKB-EC"/>
</dbReference>
<dbReference type="GO" id="GO:0006633">
    <property type="term" value="P:fatty acid biosynthetic process"/>
    <property type="evidence" value="ECO:0007669"/>
    <property type="project" value="UniProtKB-UniRule"/>
</dbReference>
<dbReference type="GO" id="GO:0009245">
    <property type="term" value="P:lipid A biosynthetic process"/>
    <property type="evidence" value="ECO:0007669"/>
    <property type="project" value="UniProtKB-UniRule"/>
</dbReference>
<dbReference type="CDD" id="cd01288">
    <property type="entry name" value="FabZ"/>
    <property type="match status" value="1"/>
</dbReference>
<dbReference type="FunFam" id="3.10.129.10:FF:000001">
    <property type="entry name" value="3-hydroxyacyl-[acyl-carrier-protein] dehydratase FabZ"/>
    <property type="match status" value="1"/>
</dbReference>
<dbReference type="Gene3D" id="3.10.129.10">
    <property type="entry name" value="Hotdog Thioesterase"/>
    <property type="match status" value="1"/>
</dbReference>
<dbReference type="HAMAP" id="MF_00406">
    <property type="entry name" value="FabZ"/>
    <property type="match status" value="1"/>
</dbReference>
<dbReference type="InterPro" id="IPR013114">
    <property type="entry name" value="FabA_FabZ"/>
</dbReference>
<dbReference type="InterPro" id="IPR010084">
    <property type="entry name" value="FabZ"/>
</dbReference>
<dbReference type="InterPro" id="IPR029069">
    <property type="entry name" value="HotDog_dom_sf"/>
</dbReference>
<dbReference type="NCBIfam" id="TIGR01750">
    <property type="entry name" value="fabZ"/>
    <property type="match status" value="1"/>
</dbReference>
<dbReference type="NCBIfam" id="NF000582">
    <property type="entry name" value="PRK00006.1"/>
    <property type="match status" value="1"/>
</dbReference>
<dbReference type="PANTHER" id="PTHR30272">
    <property type="entry name" value="3-HYDROXYACYL-[ACYL-CARRIER-PROTEIN] DEHYDRATASE"/>
    <property type="match status" value="1"/>
</dbReference>
<dbReference type="PANTHER" id="PTHR30272:SF1">
    <property type="entry name" value="3-HYDROXYACYL-[ACYL-CARRIER-PROTEIN] DEHYDRATASE"/>
    <property type="match status" value="1"/>
</dbReference>
<dbReference type="Pfam" id="PF07977">
    <property type="entry name" value="FabA"/>
    <property type="match status" value="1"/>
</dbReference>
<dbReference type="SUPFAM" id="SSF54637">
    <property type="entry name" value="Thioesterase/thiol ester dehydrase-isomerase"/>
    <property type="match status" value="1"/>
</dbReference>
<feature type="chain" id="PRO_0000230806" description="3-hydroxyacyl-[acyl-carrier-protein] dehydratase FabZ">
    <location>
        <begin position="1"/>
        <end position="155"/>
    </location>
</feature>
<feature type="active site" evidence="1">
    <location>
        <position position="54"/>
    </location>
</feature>
<accession>Q39F54</accession>
<evidence type="ECO:0000255" key="1">
    <source>
        <dbReference type="HAMAP-Rule" id="MF_00406"/>
    </source>
</evidence>
<comment type="function">
    <text evidence="1">Involved in unsaturated fatty acids biosynthesis. Catalyzes the dehydration of short chain beta-hydroxyacyl-ACPs and long chain saturated and unsaturated beta-hydroxyacyl-ACPs.</text>
</comment>
<comment type="catalytic activity">
    <reaction evidence="1">
        <text>a (3R)-hydroxyacyl-[ACP] = a (2E)-enoyl-[ACP] + H2O</text>
        <dbReference type="Rhea" id="RHEA:13097"/>
        <dbReference type="Rhea" id="RHEA-COMP:9925"/>
        <dbReference type="Rhea" id="RHEA-COMP:9945"/>
        <dbReference type="ChEBI" id="CHEBI:15377"/>
        <dbReference type="ChEBI" id="CHEBI:78784"/>
        <dbReference type="ChEBI" id="CHEBI:78827"/>
        <dbReference type="EC" id="4.2.1.59"/>
    </reaction>
</comment>
<comment type="subcellular location">
    <subcellularLocation>
        <location evidence="1">Cytoplasm</location>
    </subcellularLocation>
</comment>
<comment type="similarity">
    <text evidence="1">Belongs to the thioester dehydratase family. FabZ subfamily.</text>
</comment>
<protein>
    <recommendedName>
        <fullName evidence="1">3-hydroxyacyl-[acyl-carrier-protein] dehydratase FabZ</fullName>
        <ecNumber evidence="1">4.2.1.59</ecNumber>
    </recommendedName>
    <alternativeName>
        <fullName evidence="1">(3R)-hydroxymyristoyl-[acyl-carrier-protein] dehydratase</fullName>
        <shortName evidence="1">(3R)-hydroxymyristoyl-ACP dehydrase</shortName>
    </alternativeName>
    <alternativeName>
        <fullName evidence="1">Beta-hydroxyacyl-ACP dehydratase</fullName>
    </alternativeName>
</protein>
<gene>
    <name evidence="1" type="primary">fabZ</name>
    <name type="ordered locus">Bcep18194_A5318</name>
</gene>
<sequence>MSTEKINLDIHKILTLLPHRYPILLVDRVLELEPHKGIKALKNVSINEPYFQGHFPKRPVMPGVLILEALAQAAALLTFSEEQPKDPENTLYYFVGIDGARFKRPVEPGDQLILNVTFERYIRGIWKFKAVAEVDGKVAAEAELMCTVKTTDVAP</sequence>
<keyword id="KW-0963">Cytoplasm</keyword>
<keyword id="KW-0441">Lipid A biosynthesis</keyword>
<keyword id="KW-0444">Lipid biosynthesis</keyword>
<keyword id="KW-0443">Lipid metabolism</keyword>
<keyword id="KW-0456">Lyase</keyword>
<reference key="1">
    <citation type="submission" date="2005-10" db="EMBL/GenBank/DDBJ databases">
        <title>Complete sequence of chromosome 1 of Burkholderia sp. 383.</title>
        <authorList>
            <consortium name="US DOE Joint Genome Institute"/>
            <person name="Copeland A."/>
            <person name="Lucas S."/>
            <person name="Lapidus A."/>
            <person name="Barry K."/>
            <person name="Detter J.C."/>
            <person name="Glavina T."/>
            <person name="Hammon N."/>
            <person name="Israni S."/>
            <person name="Pitluck S."/>
            <person name="Chain P."/>
            <person name="Malfatti S."/>
            <person name="Shin M."/>
            <person name="Vergez L."/>
            <person name="Schmutz J."/>
            <person name="Larimer F."/>
            <person name="Land M."/>
            <person name="Kyrpides N."/>
            <person name="Lykidis A."/>
            <person name="Richardson P."/>
        </authorList>
    </citation>
    <scope>NUCLEOTIDE SEQUENCE [LARGE SCALE GENOMIC DNA]</scope>
    <source>
        <strain>ATCC 17760 / DSM 23089 / LMG 22485 / NCIMB 9086 / R18194 / 383</strain>
    </source>
</reference>
<proteinExistence type="inferred from homology"/>
<organism>
    <name type="scientific">Burkholderia lata (strain ATCC 17760 / DSM 23089 / LMG 22485 / NCIMB 9086 / R18194 / 383)</name>
    <dbReference type="NCBI Taxonomy" id="482957"/>
    <lineage>
        <taxon>Bacteria</taxon>
        <taxon>Pseudomonadati</taxon>
        <taxon>Pseudomonadota</taxon>
        <taxon>Betaproteobacteria</taxon>
        <taxon>Burkholderiales</taxon>
        <taxon>Burkholderiaceae</taxon>
        <taxon>Burkholderia</taxon>
        <taxon>Burkholderia cepacia complex</taxon>
    </lineage>
</organism>